<protein>
    <recommendedName>
        <fullName evidence="6">Secreted LysM effector ldpB</fullName>
    </recommendedName>
    <alternativeName>
        <fullName evidence="6">LysM domain protein B</fullName>
    </alternativeName>
</protein>
<keyword id="KW-0134">Cell wall</keyword>
<keyword id="KW-0147">Chitin-binding</keyword>
<keyword id="KW-0272">Extracellular matrix</keyword>
<keyword id="KW-0325">Glycoprotein</keyword>
<keyword id="KW-1185">Reference proteome</keyword>
<keyword id="KW-0677">Repeat</keyword>
<keyword id="KW-0964">Secreted</keyword>
<keyword id="KW-0732">Signal</keyword>
<keyword id="KW-0843">Virulence</keyword>
<proteinExistence type="inferred from homology"/>
<dbReference type="EMBL" id="AAHF01000004">
    <property type="protein sequence ID" value="EAL90872.2"/>
    <property type="molecule type" value="Genomic_DNA"/>
</dbReference>
<dbReference type="RefSeq" id="XP_752910.2">
    <property type="nucleotide sequence ID" value="XM_747817.2"/>
</dbReference>
<dbReference type="SMR" id="Q4WRR0"/>
<dbReference type="STRING" id="330879.Q4WRR0"/>
<dbReference type="EnsemblFungi" id="EAL90872">
    <property type="protein sequence ID" value="EAL90872"/>
    <property type="gene ID" value="AFUA_1G15420"/>
</dbReference>
<dbReference type="GeneID" id="3509933"/>
<dbReference type="KEGG" id="afm:AFUA_1G15420"/>
<dbReference type="VEuPathDB" id="FungiDB:Afu1g15420"/>
<dbReference type="eggNOG" id="KOG2806">
    <property type="taxonomic scope" value="Eukaryota"/>
</dbReference>
<dbReference type="HOGENOM" id="CLU_010591_0_0_1"/>
<dbReference type="InParanoid" id="Q4WRR0"/>
<dbReference type="OMA" id="NCWAIAN"/>
<dbReference type="OrthoDB" id="5985073at2759"/>
<dbReference type="PHI-base" id="PHI:8935"/>
<dbReference type="Proteomes" id="UP000002530">
    <property type="component" value="Chromosome 1"/>
</dbReference>
<dbReference type="GO" id="GO:0005576">
    <property type="term" value="C:extracellular region"/>
    <property type="evidence" value="ECO:0007669"/>
    <property type="project" value="UniProtKB-SubCell"/>
</dbReference>
<dbReference type="GO" id="GO:0008061">
    <property type="term" value="F:chitin binding"/>
    <property type="evidence" value="ECO:0007669"/>
    <property type="project" value="UniProtKB-KW"/>
</dbReference>
<dbReference type="CDD" id="cd00118">
    <property type="entry name" value="LysM"/>
    <property type="match status" value="2"/>
</dbReference>
<dbReference type="Gene3D" id="3.10.350.10">
    <property type="entry name" value="LysM domain"/>
    <property type="match status" value="3"/>
</dbReference>
<dbReference type="InterPro" id="IPR052210">
    <property type="entry name" value="LysM1-like"/>
</dbReference>
<dbReference type="InterPro" id="IPR018392">
    <property type="entry name" value="LysM_dom"/>
</dbReference>
<dbReference type="InterPro" id="IPR036779">
    <property type="entry name" value="LysM_dom_sf"/>
</dbReference>
<dbReference type="PANTHER" id="PTHR34997">
    <property type="entry name" value="AM15"/>
    <property type="match status" value="1"/>
</dbReference>
<dbReference type="PANTHER" id="PTHR34997:SF1">
    <property type="entry name" value="PEPTIDOGLYCAN-BINDING LYSIN DOMAIN"/>
    <property type="match status" value="1"/>
</dbReference>
<dbReference type="Pfam" id="PF01476">
    <property type="entry name" value="LysM"/>
    <property type="match status" value="2"/>
</dbReference>
<dbReference type="SMART" id="SM00257">
    <property type="entry name" value="LysM"/>
    <property type="match status" value="2"/>
</dbReference>
<dbReference type="SUPFAM" id="SSF54106">
    <property type="entry name" value="LysM domain"/>
    <property type="match status" value="2"/>
</dbReference>
<dbReference type="PROSITE" id="PS51782">
    <property type="entry name" value="LYSM"/>
    <property type="match status" value="2"/>
</dbReference>
<evidence type="ECO:0000255" key="1"/>
<evidence type="ECO:0000255" key="2">
    <source>
        <dbReference type="PROSITE-ProRule" id="PRU00498"/>
    </source>
</evidence>
<evidence type="ECO:0000255" key="3">
    <source>
        <dbReference type="PROSITE-ProRule" id="PRU01118"/>
    </source>
</evidence>
<evidence type="ECO:0000256" key="4">
    <source>
        <dbReference type="SAM" id="MobiDB-lite"/>
    </source>
</evidence>
<evidence type="ECO:0000269" key="5">
    <source>
    </source>
</evidence>
<evidence type="ECO:0000303" key="6">
    <source>
    </source>
</evidence>
<evidence type="ECO:0000305" key="7"/>
<evidence type="ECO:0000305" key="8">
    <source>
    </source>
</evidence>
<organism>
    <name type="scientific">Aspergillus fumigatus (strain ATCC MYA-4609 / CBS 101355 / FGSC A1100 / Af293)</name>
    <name type="common">Neosartorya fumigata</name>
    <dbReference type="NCBI Taxonomy" id="330879"/>
    <lineage>
        <taxon>Eukaryota</taxon>
        <taxon>Fungi</taxon>
        <taxon>Dikarya</taxon>
        <taxon>Ascomycota</taxon>
        <taxon>Pezizomycotina</taxon>
        <taxon>Eurotiomycetes</taxon>
        <taxon>Eurotiomycetidae</taxon>
        <taxon>Eurotiales</taxon>
        <taxon>Aspergillaceae</taxon>
        <taxon>Aspergillus</taxon>
        <taxon>Aspergillus subgen. Fumigati</taxon>
    </lineage>
</organism>
<feature type="signal peptide" evidence="1">
    <location>
        <begin position="1"/>
        <end position="19"/>
    </location>
</feature>
<feature type="chain" id="PRO_5004245769" description="Secreted LysM effector ldpB">
    <location>
        <begin position="20"/>
        <end position="299"/>
    </location>
</feature>
<feature type="domain" description="LysM 1" evidence="3">
    <location>
        <begin position="46"/>
        <end position="91"/>
    </location>
</feature>
<feature type="domain" description="LysM 2" evidence="3">
    <location>
        <begin position="135"/>
        <end position="182"/>
    </location>
</feature>
<feature type="domain" description="LysM 3" evidence="3">
    <location>
        <begin position="211"/>
        <end position="258"/>
    </location>
</feature>
<feature type="region of interest" description="Disordered" evidence="4">
    <location>
        <begin position="266"/>
        <end position="288"/>
    </location>
</feature>
<feature type="compositionally biased region" description="Low complexity" evidence="4">
    <location>
        <begin position="266"/>
        <end position="283"/>
    </location>
</feature>
<feature type="glycosylation site" description="N-linked (GlcNAc...) asparagine" evidence="2">
    <location>
        <position position="154"/>
    </location>
</feature>
<comment type="function">
    <text evidence="8">Cell wall chitin of A.fumigatus recruits lung eosinophils during infection and ldpB might have a role in sequestration of chitin and act as triggers of host immunity to dampen host defense.</text>
</comment>
<comment type="subcellular location">
    <subcellularLocation>
        <location evidence="5">Secreted</location>
    </subcellularLocation>
    <subcellularLocation>
        <location evidence="5">Secreted</location>
        <location evidence="5">Cell wall</location>
    </subcellularLocation>
    <subcellularLocation>
        <location evidence="5">Secreted</location>
        <location evidence="5">Extracellular space</location>
        <location evidence="5">Extracellular matrix</location>
    </subcellularLocation>
</comment>
<comment type="domain">
    <text evidence="8">The LysM (lysin motif) domains are small globular domains involved in binding chitin in eukaryotes. LcpB contains 3 LysM domains.</text>
</comment>
<comment type="disruption phenotype">
    <text evidence="5">Has no significant effects on cell wall chitin content, cell wall integrity, fungal morphology and fungal growth (PubMed:30833675). Does not affect survival in a mouse model of invasive pulmonary aspergillosis (PubMed:30833675).</text>
</comment>
<comment type="similarity">
    <text evidence="7">Belongs to the secreted LysM effector family.</text>
</comment>
<gene>
    <name evidence="6" type="primary">ldpB</name>
    <name type="ORF">AFUA_1G15420</name>
</gene>
<reference key="1">
    <citation type="journal article" date="2005" name="Nature">
        <title>Genomic sequence of the pathogenic and allergenic filamentous fungus Aspergillus fumigatus.</title>
        <authorList>
            <person name="Nierman W.C."/>
            <person name="Pain A."/>
            <person name="Anderson M.J."/>
            <person name="Wortman J.R."/>
            <person name="Kim H.S."/>
            <person name="Arroyo J."/>
            <person name="Berriman M."/>
            <person name="Abe K."/>
            <person name="Archer D.B."/>
            <person name="Bermejo C."/>
            <person name="Bennett J.W."/>
            <person name="Bowyer P."/>
            <person name="Chen D."/>
            <person name="Collins M."/>
            <person name="Coulsen R."/>
            <person name="Davies R."/>
            <person name="Dyer P.S."/>
            <person name="Farman M.L."/>
            <person name="Fedorova N."/>
            <person name="Fedorova N.D."/>
            <person name="Feldblyum T.V."/>
            <person name="Fischer R."/>
            <person name="Fosker N."/>
            <person name="Fraser A."/>
            <person name="Garcia J.L."/>
            <person name="Garcia M.J."/>
            <person name="Goble A."/>
            <person name="Goldman G.H."/>
            <person name="Gomi K."/>
            <person name="Griffith-Jones S."/>
            <person name="Gwilliam R."/>
            <person name="Haas B.J."/>
            <person name="Haas H."/>
            <person name="Harris D.E."/>
            <person name="Horiuchi H."/>
            <person name="Huang J."/>
            <person name="Humphray S."/>
            <person name="Jimenez J."/>
            <person name="Keller N."/>
            <person name="Khouri H."/>
            <person name="Kitamoto K."/>
            <person name="Kobayashi T."/>
            <person name="Konzack S."/>
            <person name="Kulkarni R."/>
            <person name="Kumagai T."/>
            <person name="Lafton A."/>
            <person name="Latge J.-P."/>
            <person name="Li W."/>
            <person name="Lord A."/>
            <person name="Lu C."/>
            <person name="Majoros W.H."/>
            <person name="May G.S."/>
            <person name="Miller B.L."/>
            <person name="Mohamoud Y."/>
            <person name="Molina M."/>
            <person name="Monod M."/>
            <person name="Mouyna I."/>
            <person name="Mulligan S."/>
            <person name="Murphy L.D."/>
            <person name="O'Neil S."/>
            <person name="Paulsen I."/>
            <person name="Penalva M.A."/>
            <person name="Pertea M."/>
            <person name="Price C."/>
            <person name="Pritchard B.L."/>
            <person name="Quail M.A."/>
            <person name="Rabbinowitsch E."/>
            <person name="Rawlins N."/>
            <person name="Rajandream M.A."/>
            <person name="Reichard U."/>
            <person name="Renauld H."/>
            <person name="Robson G.D."/>
            <person name="Rodriguez de Cordoba S."/>
            <person name="Rodriguez-Pena J.M."/>
            <person name="Ronning C.M."/>
            <person name="Rutter S."/>
            <person name="Salzberg S.L."/>
            <person name="Sanchez M."/>
            <person name="Sanchez-Ferrero J.C."/>
            <person name="Saunders D."/>
            <person name="Seeger K."/>
            <person name="Squares R."/>
            <person name="Squares S."/>
            <person name="Takeuchi M."/>
            <person name="Tekaia F."/>
            <person name="Turner G."/>
            <person name="Vazquez de Aldana C.R."/>
            <person name="Weidman J."/>
            <person name="White O."/>
            <person name="Woodward J.R."/>
            <person name="Yu J.-H."/>
            <person name="Fraser C.M."/>
            <person name="Galagan J.E."/>
            <person name="Asai K."/>
            <person name="Machida M."/>
            <person name="Hall N."/>
            <person name="Barrell B.G."/>
            <person name="Denning D.W."/>
        </authorList>
    </citation>
    <scope>NUCLEOTIDE SEQUENCE [LARGE SCALE GENOMIC DNA]</scope>
    <source>
        <strain>ATCC MYA-4609 / CBS 101355 / FGSC A1100 / Af293</strain>
    </source>
</reference>
<reference key="2">
    <citation type="journal article" date="2019" name="Sci. Rep.">
        <title>Characterisation of novel-cell-wall LysM-domain proteins LdpA and LdpB from the human pathogenic fungus Aspergillus fumigatus.</title>
        <authorList>
            <person name="Muraosa Y."/>
            <person name="Toyotome T."/>
            <person name="Yahiro M."/>
            <person name="Kamei K."/>
        </authorList>
    </citation>
    <scope>FUNCTION</scope>
    <scope>SUBCELLULAR LOCATION</scope>
    <scope>DISRUPTION PHENOTYPE</scope>
    <scope>DOMAIN</scope>
</reference>
<accession>Q4WRR0</accession>
<sequence length="299" mass="32428">MGLTSILIAQVLFLGAANSAVVKRWPCSVSPTGPTDPSVAKNCGYWVNDVAKNDQCADLEGYFDISREELVNWNPSLKENCRLQNGHSYCVAASDLTTRSTDSAEEASRMDMATGVEAADLPSPTQGGLAANCNAFYKVKTGDSCWSIINDFGNFSIYDFYRWNPSVGQSCEALYPDYYVCIGVQEQEPPVATPTNPPGPVLSGTPANCNKYHKVLSGDNCWAIANQYGISLDQFYSWNPAVKPTSCQSLLPDYYVCVGVAETPSATATPQPTPQPQQSSSPDQPMPQPILSRLLRILL</sequence>
<name>LYSMB_ASPFU</name>